<evidence type="ECO:0000250" key="1"/>
<evidence type="ECO:0000255" key="2"/>
<evidence type="ECO:0000269" key="3">
    <source>
    </source>
</evidence>
<evidence type="ECO:0000305" key="4"/>
<proteinExistence type="evidence at protein level"/>
<keyword id="KW-1015">Disulfide bond</keyword>
<keyword id="KW-0872">Ion channel impairing toxin</keyword>
<keyword id="KW-0960">Knottin</keyword>
<keyword id="KW-0528">Neurotoxin</keyword>
<keyword id="KW-0964">Secreted</keyword>
<keyword id="KW-0732">Signal</keyword>
<keyword id="KW-0800">Toxin</keyword>
<feature type="signal peptide" evidence="2">
    <location>
        <begin position="1"/>
        <end position="22"/>
    </location>
</feature>
<feature type="propeptide" id="PRO_0000034968" evidence="1">
    <location>
        <begin position="23"/>
        <end position="47"/>
    </location>
</feature>
<feature type="peptide" id="PRO_0000034969" description="Conotoxin Vc6b">
    <location>
        <begin position="49"/>
        <end position="77"/>
    </location>
</feature>
<feature type="disulfide bond" evidence="1">
    <location>
        <begin position="52"/>
        <end position="66"/>
    </location>
</feature>
<feature type="disulfide bond" evidence="1">
    <location>
        <begin position="59"/>
        <end position="72"/>
    </location>
</feature>
<feature type="disulfide bond" evidence="1">
    <location>
        <begin position="67"/>
        <end position="76"/>
    </location>
</feature>
<reference key="1">
    <citation type="journal article" date="2004" name="J. Mass Spectrom.">
        <title>Determining sequences and post-translational modifications of novel conotoxins in Conus victoriae using cDNA sequencing and mass spectrometry.</title>
        <authorList>
            <person name="Jakubowski J.A."/>
            <person name="Keays D.A."/>
            <person name="Kelley W.P."/>
            <person name="Sandall D.W."/>
            <person name="Bingham J.-P."/>
            <person name="Livett B.G."/>
            <person name="Gayler K.R."/>
            <person name="Sweedler J.V."/>
        </authorList>
    </citation>
    <scope>NUCLEOTIDE SEQUENCE [MRNA]</scope>
    <source>
        <tissue>Venom duct</tissue>
    </source>
</reference>
<reference key="2">
    <citation type="journal article" date="2004" name="Anal. Chem.">
        <title>Sequencing and mass profiling highly modified conotoxins using global reduction/alkylation followed by mass spectrometry.</title>
        <authorList>
            <person name="Jakubowski J.A."/>
            <person name="Sweedler J.V."/>
        </authorList>
    </citation>
    <scope>MASS SPECTROMETRY</scope>
    <source>
        <tissue>Venom</tissue>
    </source>
</reference>
<dbReference type="SMR" id="P69759"/>
<dbReference type="ConoServer" id="1399">
    <property type="toxin name" value="VcVIB precursor"/>
</dbReference>
<dbReference type="GO" id="GO:0005576">
    <property type="term" value="C:extracellular region"/>
    <property type="evidence" value="ECO:0007669"/>
    <property type="project" value="UniProtKB-SubCell"/>
</dbReference>
<dbReference type="GO" id="GO:0008200">
    <property type="term" value="F:ion channel inhibitor activity"/>
    <property type="evidence" value="ECO:0007669"/>
    <property type="project" value="InterPro"/>
</dbReference>
<dbReference type="GO" id="GO:0090729">
    <property type="term" value="F:toxin activity"/>
    <property type="evidence" value="ECO:0007669"/>
    <property type="project" value="UniProtKB-KW"/>
</dbReference>
<dbReference type="InterPro" id="IPR004214">
    <property type="entry name" value="Conotoxin"/>
</dbReference>
<dbReference type="Pfam" id="PF02950">
    <property type="entry name" value="Conotoxin"/>
    <property type="match status" value="1"/>
</dbReference>
<name>O16B_CONVC</name>
<accession>P69759</accession>
<protein>
    <recommendedName>
        <fullName>Conotoxin Vc6b</fullName>
    </recommendedName>
    <alternativeName>
        <fullName>Vc6.2</fullName>
    </alternativeName>
</protein>
<sequence length="77" mass="8503">MKLTCMMIVAVLFLTANTFVTADDSGNGMENLFPKAGHEMENLEASNRGKPCHEEGQLCDPFLQNCCLGWNCVFVCI</sequence>
<organism>
    <name type="scientific">Conus victoriae</name>
    <name type="common">Queen Victoria cone</name>
    <dbReference type="NCBI Taxonomy" id="319920"/>
    <lineage>
        <taxon>Eukaryota</taxon>
        <taxon>Metazoa</taxon>
        <taxon>Spiralia</taxon>
        <taxon>Lophotrochozoa</taxon>
        <taxon>Mollusca</taxon>
        <taxon>Gastropoda</taxon>
        <taxon>Caenogastropoda</taxon>
        <taxon>Neogastropoda</taxon>
        <taxon>Conoidea</taxon>
        <taxon>Conidae</taxon>
        <taxon>Conus</taxon>
        <taxon>Cylinder</taxon>
    </lineage>
</organism>
<comment type="subcellular location">
    <subcellularLocation>
        <location>Secreted</location>
    </subcellularLocation>
</comment>
<comment type="tissue specificity">
    <text>Expressed by the venom duct.</text>
</comment>
<comment type="domain">
    <text evidence="1">The presence of a 'disulfide through disulfide knot' structurally defines this protein as a knottin.</text>
</comment>
<comment type="domain">
    <text>The cysteine framework is VI/VII (C-C-CC-C-C).</text>
</comment>
<comment type="mass spectrometry" mass="3248.4" method="Electrospray" evidence="3"/>
<comment type="similarity">
    <text evidence="4">Belongs to the conotoxin O1 superfamily.</text>
</comment>